<proteinExistence type="inferred from homology"/>
<feature type="chain" id="PRO_0000058383" description="Protein YjdM">
    <location>
        <begin position="1"/>
        <end position="111"/>
    </location>
</feature>
<reference key="1">
    <citation type="journal article" date="1990" name="J. Biol. Chem.">
        <title>Molecular biology of carbon-phosphorus bond cleavage. Cloning and sequencing of the phn (psiD) genes involved in alkylphosphonate uptake and C-P lyase activity in Escherichia coli B.</title>
        <authorList>
            <person name="Chen C.-M."/>
            <person name="Ye Q.-Z."/>
            <person name="Zhu Z."/>
            <person name="Wanner B.L."/>
            <person name="Walsh C.T."/>
        </authorList>
    </citation>
    <scope>NUCLEOTIDE SEQUENCE [GENOMIC DNA]</scope>
    <source>
        <strain>B</strain>
    </source>
</reference>
<reference key="2">
    <citation type="journal article" date="1995" name="Nucleic Acids Res.">
        <title>Analysis of the Escherichia coli genome VI: DNA sequence of the region from 92.8 through 100 minutes.</title>
        <authorList>
            <person name="Burland V.D."/>
            <person name="Plunkett G. III"/>
            <person name="Sofia H.J."/>
            <person name="Daniels D.L."/>
            <person name="Blattner F.R."/>
        </authorList>
    </citation>
    <scope>NUCLEOTIDE SEQUENCE [LARGE SCALE GENOMIC DNA]</scope>
    <source>
        <strain>K12 / MG1655 / ATCC 47076</strain>
    </source>
</reference>
<reference key="3">
    <citation type="journal article" date="1997" name="Science">
        <title>The complete genome sequence of Escherichia coli K-12.</title>
        <authorList>
            <person name="Blattner F.R."/>
            <person name="Plunkett G. III"/>
            <person name="Bloch C.A."/>
            <person name="Perna N.T."/>
            <person name="Burland V."/>
            <person name="Riley M."/>
            <person name="Collado-Vides J."/>
            <person name="Glasner J.D."/>
            <person name="Rode C.K."/>
            <person name="Mayhew G.F."/>
            <person name="Gregor J."/>
            <person name="Davis N.W."/>
            <person name="Kirkpatrick H.A."/>
            <person name="Goeden M.A."/>
            <person name="Rose D.J."/>
            <person name="Mau B."/>
            <person name="Shao Y."/>
        </authorList>
    </citation>
    <scope>NUCLEOTIDE SEQUENCE [LARGE SCALE GENOMIC DNA]</scope>
    <source>
        <strain>K12 / MG1655 / ATCC 47076</strain>
    </source>
</reference>
<reference key="4">
    <citation type="journal article" date="2006" name="Mol. Syst. Biol.">
        <title>Highly accurate genome sequences of Escherichia coli K-12 strains MG1655 and W3110.</title>
        <authorList>
            <person name="Hayashi K."/>
            <person name="Morooka N."/>
            <person name="Yamamoto Y."/>
            <person name="Fujita K."/>
            <person name="Isono K."/>
            <person name="Choi S."/>
            <person name="Ohtsubo E."/>
            <person name="Baba T."/>
            <person name="Wanner B.L."/>
            <person name="Mori H."/>
            <person name="Horiuchi T."/>
        </authorList>
    </citation>
    <scope>NUCLEOTIDE SEQUENCE [LARGE SCALE GENOMIC DNA]</scope>
    <source>
        <strain>K12 / W3110 / ATCC 27325 / DSM 5911</strain>
    </source>
</reference>
<reference key="5">
    <citation type="journal article" date="1993" name="Gene">
        <title>Evidence for a fourteen-gene, phnC to phnP locus for phosphonate metabolism in Escherichia coli.</title>
        <authorList>
            <person name="Metcalf W.W."/>
            <person name="Wanner B.L."/>
        </authorList>
    </citation>
    <scope>DISRUPTION PHENOTYPE</scope>
    <source>
        <strain>B</strain>
    </source>
</reference>
<sequence length="111" mass="12345">MSLPHCPKCNSEYTYEDNGMYICPECAYEWNDAEPAQESDELIVKDANGNLLADGDSVTIIKDLKVKGSSSMLKIGTKVKNIRLVEGDHNIDCKIDGFGPMKLKSEFVKKN</sequence>
<keyword id="KW-1185">Reference proteome</keyword>
<comment type="disruption phenotype">
    <text evidence="1">No effect on phosphonate metabolism in B strains.</text>
</comment>
<comment type="similarity">
    <text evidence="3">Belongs to the YjdM family.</text>
</comment>
<comment type="caution">
    <text evidence="4">Was originally thought to be involved in phosphonate metabolism.</text>
</comment>
<accession>P0AFJ1</accession>
<accession>P16680</accession>
<accession>Q2M6J6</accession>
<gene>
    <name type="primary">yjdM</name>
    <name evidence="2" type="synonym">phnA</name>
    <name type="ordered locus">b4108</name>
    <name type="ordered locus">JW4069</name>
</gene>
<organism>
    <name type="scientific">Escherichia coli (strain K12)</name>
    <dbReference type="NCBI Taxonomy" id="83333"/>
    <lineage>
        <taxon>Bacteria</taxon>
        <taxon>Pseudomonadati</taxon>
        <taxon>Pseudomonadota</taxon>
        <taxon>Gammaproteobacteria</taxon>
        <taxon>Enterobacterales</taxon>
        <taxon>Enterobacteriaceae</taxon>
        <taxon>Escherichia</taxon>
    </lineage>
</organism>
<evidence type="ECO:0000269" key="1">
    <source>
    </source>
</evidence>
<evidence type="ECO:0000303" key="2">
    <source>
    </source>
</evidence>
<evidence type="ECO:0000305" key="3"/>
<evidence type="ECO:0000305" key="4">
    <source>
    </source>
</evidence>
<name>YJDM_ECOLI</name>
<protein>
    <recommendedName>
        <fullName evidence="3">Protein YjdM</fullName>
    </recommendedName>
</protein>
<dbReference type="EMBL" id="J05260">
    <property type="protein sequence ID" value="AAA24337.1"/>
    <property type="molecule type" value="Genomic_DNA"/>
</dbReference>
<dbReference type="EMBL" id="U14003">
    <property type="protein sequence ID" value="AAA97007.1"/>
    <property type="molecule type" value="Genomic_DNA"/>
</dbReference>
<dbReference type="EMBL" id="U00096">
    <property type="protein sequence ID" value="AAC77069.1"/>
    <property type="molecule type" value="Genomic_DNA"/>
</dbReference>
<dbReference type="EMBL" id="AP009048">
    <property type="protein sequence ID" value="BAE78110.1"/>
    <property type="molecule type" value="Genomic_DNA"/>
</dbReference>
<dbReference type="PIR" id="B35718">
    <property type="entry name" value="B35718"/>
</dbReference>
<dbReference type="RefSeq" id="NP_418532.1">
    <property type="nucleotide sequence ID" value="NC_000913.3"/>
</dbReference>
<dbReference type="RefSeq" id="WP_001300891.1">
    <property type="nucleotide sequence ID" value="NZ_SSZK01000018.1"/>
</dbReference>
<dbReference type="SMR" id="P0AFJ1"/>
<dbReference type="BioGRID" id="4263088">
    <property type="interactions" value="55"/>
</dbReference>
<dbReference type="DIP" id="DIP-48079N"/>
<dbReference type="FunCoup" id="P0AFJ1">
    <property type="interactions" value="109"/>
</dbReference>
<dbReference type="IntAct" id="P0AFJ1">
    <property type="interactions" value="2"/>
</dbReference>
<dbReference type="STRING" id="511145.b4108"/>
<dbReference type="jPOST" id="P0AFJ1"/>
<dbReference type="PaxDb" id="511145-b4108"/>
<dbReference type="EnsemblBacteria" id="AAC77069">
    <property type="protein sequence ID" value="AAC77069"/>
    <property type="gene ID" value="b4108"/>
</dbReference>
<dbReference type="GeneID" id="948621"/>
<dbReference type="KEGG" id="ecj:JW4069"/>
<dbReference type="KEGG" id="eco:b4108"/>
<dbReference type="KEGG" id="ecoc:C3026_22195"/>
<dbReference type="PATRIC" id="fig|511145.12.peg.4239"/>
<dbReference type="EchoBASE" id="EB0705"/>
<dbReference type="eggNOG" id="COG2824">
    <property type="taxonomic scope" value="Bacteria"/>
</dbReference>
<dbReference type="HOGENOM" id="CLU_134486_0_1_6"/>
<dbReference type="InParanoid" id="P0AFJ1"/>
<dbReference type="OMA" id="SCLYEWN"/>
<dbReference type="OrthoDB" id="9810131at2"/>
<dbReference type="PhylomeDB" id="P0AFJ1"/>
<dbReference type="BioCyc" id="EcoCyc:EG10711-MONOMER"/>
<dbReference type="PRO" id="PR:P0AFJ1"/>
<dbReference type="Proteomes" id="UP000000625">
    <property type="component" value="Chromosome"/>
</dbReference>
<dbReference type="GO" id="GO:0005829">
    <property type="term" value="C:cytosol"/>
    <property type="evidence" value="ECO:0000314"/>
    <property type="project" value="EcoCyc"/>
</dbReference>
<dbReference type="FunFam" id="2.20.25.10:FF:000003">
    <property type="entry name" value="Alkylphosphonate utilization protein PhnA"/>
    <property type="match status" value="1"/>
</dbReference>
<dbReference type="FunFam" id="2.30.30.40:FF:000013">
    <property type="entry name" value="Alkylphosphonate utilization protein PhnA"/>
    <property type="match status" value="1"/>
</dbReference>
<dbReference type="Gene3D" id="2.20.25.10">
    <property type="match status" value="1"/>
</dbReference>
<dbReference type="Gene3D" id="2.30.30.40">
    <property type="entry name" value="SH3 Domains"/>
    <property type="match status" value="1"/>
</dbReference>
<dbReference type="InterPro" id="IPR004624">
    <property type="entry name" value="YjdM"/>
</dbReference>
<dbReference type="InterPro" id="IPR013988">
    <property type="entry name" value="YjdM_C"/>
</dbReference>
<dbReference type="InterPro" id="IPR013987">
    <property type="entry name" value="YjdM_N"/>
</dbReference>
<dbReference type="NCBIfam" id="TIGR00686">
    <property type="entry name" value="phnA"/>
    <property type="match status" value="1"/>
</dbReference>
<dbReference type="PANTHER" id="PTHR30305:SF3">
    <property type="entry name" value="PROTEIN YJDM"/>
    <property type="match status" value="1"/>
</dbReference>
<dbReference type="PANTHER" id="PTHR30305">
    <property type="entry name" value="PROTEIN YJDM-RELATED"/>
    <property type="match status" value="1"/>
</dbReference>
<dbReference type="Pfam" id="PF03831">
    <property type="entry name" value="YjdM"/>
    <property type="match status" value="1"/>
</dbReference>
<dbReference type="Pfam" id="PF08274">
    <property type="entry name" value="Zn_Ribbon_YjdM"/>
    <property type="match status" value="1"/>
</dbReference>
<dbReference type="SUPFAM" id="SSF82057">
    <property type="entry name" value="Prokaryotic SH3-related domain"/>
    <property type="match status" value="1"/>
</dbReference>
<dbReference type="SUPFAM" id="SSF57783">
    <property type="entry name" value="Zinc beta-ribbon"/>
    <property type="match status" value="1"/>
</dbReference>